<dbReference type="EC" id="5.3.1.23" evidence="1"/>
<dbReference type="EMBL" id="CP000557">
    <property type="protein sequence ID" value="ABO66215.1"/>
    <property type="molecule type" value="Genomic_DNA"/>
</dbReference>
<dbReference type="RefSeq" id="WP_011887032.1">
    <property type="nucleotide sequence ID" value="NC_009328.1"/>
</dbReference>
<dbReference type="SMR" id="A4ILL1"/>
<dbReference type="KEGG" id="gtn:GTNG_0837"/>
<dbReference type="eggNOG" id="COG0182">
    <property type="taxonomic scope" value="Bacteria"/>
</dbReference>
<dbReference type="HOGENOM" id="CLU_016218_1_2_9"/>
<dbReference type="UniPathway" id="UPA00904">
    <property type="reaction ID" value="UER00874"/>
</dbReference>
<dbReference type="Proteomes" id="UP000001578">
    <property type="component" value="Chromosome"/>
</dbReference>
<dbReference type="GO" id="GO:0046523">
    <property type="term" value="F:S-methyl-5-thioribose-1-phosphate isomerase activity"/>
    <property type="evidence" value="ECO:0007669"/>
    <property type="project" value="UniProtKB-UniRule"/>
</dbReference>
<dbReference type="GO" id="GO:0019509">
    <property type="term" value="P:L-methionine salvage from methylthioadenosine"/>
    <property type="evidence" value="ECO:0007669"/>
    <property type="project" value="UniProtKB-UniRule"/>
</dbReference>
<dbReference type="FunFam" id="1.20.120.420:FF:000003">
    <property type="entry name" value="Methylthioribose-1-phosphate isomerase"/>
    <property type="match status" value="1"/>
</dbReference>
<dbReference type="FunFam" id="3.40.50.10470:FF:000006">
    <property type="entry name" value="Methylthioribose-1-phosphate isomerase"/>
    <property type="match status" value="1"/>
</dbReference>
<dbReference type="Gene3D" id="1.20.120.420">
    <property type="entry name" value="translation initiation factor eif-2b, domain 1"/>
    <property type="match status" value="1"/>
</dbReference>
<dbReference type="Gene3D" id="3.40.50.10470">
    <property type="entry name" value="Translation initiation factor eif-2b, domain 2"/>
    <property type="match status" value="1"/>
</dbReference>
<dbReference type="HAMAP" id="MF_01678">
    <property type="entry name" value="Salvage_MtnA"/>
    <property type="match status" value="1"/>
</dbReference>
<dbReference type="InterPro" id="IPR000649">
    <property type="entry name" value="IF-2B-related"/>
</dbReference>
<dbReference type="InterPro" id="IPR005251">
    <property type="entry name" value="IF-M1Pi"/>
</dbReference>
<dbReference type="InterPro" id="IPR042529">
    <property type="entry name" value="IF_2B-like_C"/>
</dbReference>
<dbReference type="InterPro" id="IPR011559">
    <property type="entry name" value="Initiation_fac_2B_a/b/d"/>
</dbReference>
<dbReference type="InterPro" id="IPR027363">
    <property type="entry name" value="M1Pi_N"/>
</dbReference>
<dbReference type="InterPro" id="IPR037171">
    <property type="entry name" value="NagB/RpiA_transferase-like"/>
</dbReference>
<dbReference type="NCBIfam" id="TIGR00524">
    <property type="entry name" value="eIF-2B_rel"/>
    <property type="match status" value="1"/>
</dbReference>
<dbReference type="NCBIfam" id="NF004326">
    <property type="entry name" value="PRK05720.1"/>
    <property type="match status" value="1"/>
</dbReference>
<dbReference type="NCBIfam" id="TIGR00512">
    <property type="entry name" value="salvage_mtnA"/>
    <property type="match status" value="1"/>
</dbReference>
<dbReference type="PANTHER" id="PTHR43475">
    <property type="entry name" value="METHYLTHIORIBOSE-1-PHOSPHATE ISOMERASE"/>
    <property type="match status" value="1"/>
</dbReference>
<dbReference type="PANTHER" id="PTHR43475:SF4">
    <property type="entry name" value="METHYLTHIORIBOSE-1-PHOSPHATE ISOMERASE"/>
    <property type="match status" value="1"/>
</dbReference>
<dbReference type="Pfam" id="PF01008">
    <property type="entry name" value="IF-2B"/>
    <property type="match status" value="1"/>
</dbReference>
<dbReference type="SUPFAM" id="SSF100950">
    <property type="entry name" value="NagB/RpiA/CoA transferase-like"/>
    <property type="match status" value="1"/>
</dbReference>
<accession>A4ILL1</accession>
<feature type="chain" id="PRO_0000357186" description="Methylthioribose-1-phosphate isomerase">
    <location>
        <begin position="1"/>
        <end position="355"/>
    </location>
</feature>
<feature type="active site" description="Proton donor" evidence="1">
    <location>
        <position position="239"/>
    </location>
</feature>
<feature type="binding site" evidence="1">
    <location>
        <begin position="50"/>
        <end position="52"/>
    </location>
    <ligand>
        <name>substrate</name>
    </ligand>
</feature>
<feature type="binding site" evidence="1">
    <location>
        <position position="93"/>
    </location>
    <ligand>
        <name>substrate</name>
    </ligand>
</feature>
<feature type="binding site" evidence="1">
    <location>
        <position position="198"/>
    </location>
    <ligand>
        <name>substrate</name>
    </ligand>
</feature>
<feature type="binding site" evidence="1">
    <location>
        <begin position="249"/>
        <end position="250"/>
    </location>
    <ligand>
        <name>substrate</name>
    </ligand>
</feature>
<feature type="site" description="Transition state stabilizer" evidence="1">
    <location>
        <position position="159"/>
    </location>
</feature>
<reference key="1">
    <citation type="journal article" date="2007" name="Proc. Natl. Acad. Sci. U.S.A.">
        <title>Genome and proteome of long-chain alkane degrading Geobacillus thermodenitrificans NG80-2 isolated from a deep-subsurface oil reservoir.</title>
        <authorList>
            <person name="Feng L."/>
            <person name="Wang W."/>
            <person name="Cheng J."/>
            <person name="Ren Y."/>
            <person name="Zhao G."/>
            <person name="Gao C."/>
            <person name="Tang Y."/>
            <person name="Liu X."/>
            <person name="Han W."/>
            <person name="Peng X."/>
            <person name="Liu R."/>
            <person name="Wang L."/>
        </authorList>
    </citation>
    <scope>NUCLEOTIDE SEQUENCE [LARGE SCALE GENOMIC DNA]</scope>
    <source>
        <strain>NG80-2</strain>
    </source>
</reference>
<sequence>MSTFAIPRSVEWHETHVTILNQQKLPSVTEYLDLHTLEDVHDAIVTLKVRGAPAIGITAAYGLALAASRYETESVDEFQRRLKQDRDYLASARPTAVNLFWALDRLVAAAKSAASVNEAKTTLVHEAIRIQIEDEDVCRRIGEHALSLFHRGDRIMTICNAGSIATARYGTALAPFYLAKEKGIELSVYALETRPVLQGARLTAWELMQAGVDVTLITDNMAAQTIKAKNINAIIVGADRIAQNGDTANKIGTFGLALLAQSFGIPFYVAAPLSTIDLATKTGADIPIEERHPDEVTHLNGVRIAPEGVNVYNPAFDVTPNELITAIITEKGIVYGDYETELPSLVAKEEHHETA</sequence>
<keyword id="KW-0028">Amino-acid biosynthesis</keyword>
<keyword id="KW-0413">Isomerase</keyword>
<keyword id="KW-0486">Methionine biosynthesis</keyword>
<organism>
    <name type="scientific">Geobacillus thermodenitrificans (strain NG80-2)</name>
    <dbReference type="NCBI Taxonomy" id="420246"/>
    <lineage>
        <taxon>Bacteria</taxon>
        <taxon>Bacillati</taxon>
        <taxon>Bacillota</taxon>
        <taxon>Bacilli</taxon>
        <taxon>Bacillales</taxon>
        <taxon>Anoxybacillaceae</taxon>
        <taxon>Geobacillus</taxon>
    </lineage>
</organism>
<comment type="function">
    <text evidence="1">Catalyzes the interconversion of methylthioribose-1-phosphate (MTR-1-P) into methylthioribulose-1-phosphate (MTRu-1-P).</text>
</comment>
<comment type="catalytic activity">
    <reaction evidence="1">
        <text>5-(methylsulfanyl)-alpha-D-ribose 1-phosphate = 5-(methylsulfanyl)-D-ribulose 1-phosphate</text>
        <dbReference type="Rhea" id="RHEA:19989"/>
        <dbReference type="ChEBI" id="CHEBI:58533"/>
        <dbReference type="ChEBI" id="CHEBI:58548"/>
        <dbReference type="EC" id="5.3.1.23"/>
    </reaction>
</comment>
<comment type="pathway">
    <text evidence="1">Amino-acid biosynthesis; L-methionine biosynthesis via salvage pathway; L-methionine from S-methyl-5-thio-alpha-D-ribose 1-phosphate: step 1/6.</text>
</comment>
<comment type="subunit">
    <text>Homodimer.</text>
</comment>
<comment type="similarity">
    <text evidence="2">Belongs to the eIF-2B alpha/beta/delta subunits family. MtnA subfamily.</text>
</comment>
<protein>
    <recommendedName>
        <fullName evidence="1">Methylthioribose-1-phosphate isomerase</fullName>
        <shortName evidence="1">M1Pi</shortName>
        <shortName evidence="1">MTR-1-P isomerase</shortName>
        <ecNumber evidence="1">5.3.1.23</ecNumber>
    </recommendedName>
    <alternativeName>
        <fullName evidence="1">S-methyl-5-thioribose-1-phosphate isomerase</fullName>
    </alternativeName>
</protein>
<proteinExistence type="inferred from homology"/>
<gene>
    <name evidence="1" type="primary">mtnA</name>
    <name type="ordered locus">GTNG_0837</name>
</gene>
<evidence type="ECO:0000255" key="1">
    <source>
        <dbReference type="HAMAP-Rule" id="MF_01678"/>
    </source>
</evidence>
<evidence type="ECO:0000305" key="2"/>
<name>MTNA_GEOTN</name>